<keyword id="KW-0963">Cytoplasm</keyword>
<keyword id="KW-0489">Methyltransferase</keyword>
<keyword id="KW-0698">rRNA processing</keyword>
<keyword id="KW-0949">S-adenosyl-L-methionine</keyword>
<keyword id="KW-0808">Transferase</keyword>
<feature type="chain" id="PRO_1000201536" description="Ribosomal RNA large subunit methyltransferase M">
    <location>
        <begin position="1"/>
        <end position="347"/>
    </location>
</feature>
<feature type="active site" description="Proton acceptor" evidence="1">
    <location>
        <position position="301"/>
    </location>
</feature>
<feature type="binding site" evidence="1">
    <location>
        <position position="184"/>
    </location>
    <ligand>
        <name>S-adenosyl-L-methionine</name>
        <dbReference type="ChEBI" id="CHEBI:59789"/>
    </ligand>
</feature>
<feature type="binding site" evidence="1">
    <location>
        <begin position="217"/>
        <end position="220"/>
    </location>
    <ligand>
        <name>S-adenosyl-L-methionine</name>
        <dbReference type="ChEBI" id="CHEBI:59789"/>
    </ligand>
</feature>
<feature type="binding site" evidence="1">
    <location>
        <position position="236"/>
    </location>
    <ligand>
        <name>S-adenosyl-L-methionine</name>
        <dbReference type="ChEBI" id="CHEBI:59789"/>
    </ligand>
</feature>
<feature type="binding site" evidence="1">
    <location>
        <position position="256"/>
    </location>
    <ligand>
        <name>S-adenosyl-L-methionine</name>
        <dbReference type="ChEBI" id="CHEBI:59789"/>
    </ligand>
</feature>
<feature type="binding site" evidence="1">
    <location>
        <position position="272"/>
    </location>
    <ligand>
        <name>S-adenosyl-L-methionine</name>
        <dbReference type="ChEBI" id="CHEBI:59789"/>
    </ligand>
</feature>
<protein>
    <recommendedName>
        <fullName evidence="1">Ribosomal RNA large subunit methyltransferase M</fullName>
        <ecNumber evidence="1">2.1.1.186</ecNumber>
    </recommendedName>
    <alternativeName>
        <fullName evidence="1">23S rRNA (cytidine2498-2'-O)-methyltransferase</fullName>
    </alternativeName>
    <alternativeName>
        <fullName evidence="1">23S rRNA 2'-O-ribose methyltransferase RlmM</fullName>
    </alternativeName>
</protein>
<name>RLMM_XANCB</name>
<accession>B0RUG0</accession>
<organism>
    <name type="scientific">Xanthomonas campestris pv. campestris (strain B100)</name>
    <dbReference type="NCBI Taxonomy" id="509169"/>
    <lineage>
        <taxon>Bacteria</taxon>
        <taxon>Pseudomonadati</taxon>
        <taxon>Pseudomonadota</taxon>
        <taxon>Gammaproteobacteria</taxon>
        <taxon>Lysobacterales</taxon>
        <taxon>Lysobacteraceae</taxon>
        <taxon>Xanthomonas</taxon>
    </lineage>
</organism>
<reference key="1">
    <citation type="journal article" date="2008" name="J. Biotechnol.">
        <title>The genome of Xanthomonas campestris pv. campestris B100 and its use for the reconstruction of metabolic pathways involved in xanthan biosynthesis.</title>
        <authorList>
            <person name="Vorhoelter F.-J."/>
            <person name="Schneiker S."/>
            <person name="Goesmann A."/>
            <person name="Krause L."/>
            <person name="Bekel T."/>
            <person name="Kaiser O."/>
            <person name="Linke B."/>
            <person name="Patschkowski T."/>
            <person name="Rueckert C."/>
            <person name="Schmid J."/>
            <person name="Sidhu V.K."/>
            <person name="Sieber V."/>
            <person name="Tauch A."/>
            <person name="Watt S.A."/>
            <person name="Weisshaar B."/>
            <person name="Becker A."/>
            <person name="Niehaus K."/>
            <person name="Puehler A."/>
        </authorList>
    </citation>
    <scope>NUCLEOTIDE SEQUENCE [LARGE SCALE GENOMIC DNA]</scope>
    <source>
        <strain>B100</strain>
    </source>
</reference>
<evidence type="ECO:0000255" key="1">
    <source>
        <dbReference type="HAMAP-Rule" id="MF_01551"/>
    </source>
</evidence>
<dbReference type="EC" id="2.1.1.186" evidence="1"/>
<dbReference type="EMBL" id="AM920689">
    <property type="protein sequence ID" value="CAP52902.1"/>
    <property type="molecule type" value="Genomic_DNA"/>
</dbReference>
<dbReference type="SMR" id="B0RUG0"/>
<dbReference type="KEGG" id="xca:xcc-b100_3537"/>
<dbReference type="HOGENOM" id="CLU_043780_0_0_6"/>
<dbReference type="Proteomes" id="UP000001188">
    <property type="component" value="Chromosome"/>
</dbReference>
<dbReference type="GO" id="GO:0005737">
    <property type="term" value="C:cytoplasm"/>
    <property type="evidence" value="ECO:0007669"/>
    <property type="project" value="UniProtKB-SubCell"/>
</dbReference>
<dbReference type="GO" id="GO:0008757">
    <property type="term" value="F:S-adenosylmethionine-dependent methyltransferase activity"/>
    <property type="evidence" value="ECO:0007669"/>
    <property type="project" value="UniProtKB-UniRule"/>
</dbReference>
<dbReference type="GO" id="GO:0032259">
    <property type="term" value="P:methylation"/>
    <property type="evidence" value="ECO:0007669"/>
    <property type="project" value="UniProtKB-KW"/>
</dbReference>
<dbReference type="GO" id="GO:0006364">
    <property type="term" value="P:rRNA processing"/>
    <property type="evidence" value="ECO:0007669"/>
    <property type="project" value="UniProtKB-UniRule"/>
</dbReference>
<dbReference type="Gene3D" id="3.30.2300.20">
    <property type="match status" value="1"/>
</dbReference>
<dbReference type="Gene3D" id="3.30.70.2810">
    <property type="match status" value="1"/>
</dbReference>
<dbReference type="Gene3D" id="3.40.50.150">
    <property type="entry name" value="Vaccinia Virus protein VP39"/>
    <property type="match status" value="1"/>
</dbReference>
<dbReference type="HAMAP" id="MF_01551">
    <property type="entry name" value="23SrRNA_methyltr_M"/>
    <property type="match status" value="1"/>
</dbReference>
<dbReference type="InterPro" id="IPR040739">
    <property type="entry name" value="RlmM_FDX"/>
</dbReference>
<dbReference type="InterPro" id="IPR048646">
    <property type="entry name" value="RlmM_THUMP-like"/>
</dbReference>
<dbReference type="InterPro" id="IPR002877">
    <property type="entry name" value="RNA_MeTrfase_FtsJ_dom"/>
</dbReference>
<dbReference type="InterPro" id="IPR011224">
    <property type="entry name" value="rRNA_MeTrfase_M"/>
</dbReference>
<dbReference type="InterPro" id="IPR029063">
    <property type="entry name" value="SAM-dependent_MTases_sf"/>
</dbReference>
<dbReference type="NCBIfam" id="NF008734">
    <property type="entry name" value="PRK11760.1"/>
    <property type="match status" value="1"/>
</dbReference>
<dbReference type="PANTHER" id="PTHR37524">
    <property type="entry name" value="RIBOSOMAL RNA LARGE SUBUNIT METHYLTRANSFERASE M"/>
    <property type="match status" value="1"/>
</dbReference>
<dbReference type="PANTHER" id="PTHR37524:SF2">
    <property type="entry name" value="RIBOSOMAL RNA METHYLTRANSFERASE FTSJ DOMAIN-CONTAINING PROTEIN"/>
    <property type="match status" value="1"/>
</dbReference>
<dbReference type="Pfam" id="PF01728">
    <property type="entry name" value="FtsJ"/>
    <property type="match status" value="1"/>
</dbReference>
<dbReference type="Pfam" id="PF18125">
    <property type="entry name" value="RlmM_FDX"/>
    <property type="match status" value="1"/>
</dbReference>
<dbReference type="Pfam" id="PF21239">
    <property type="entry name" value="RLMM_N"/>
    <property type="match status" value="1"/>
</dbReference>
<dbReference type="PIRSF" id="PIRSF028774">
    <property type="entry name" value="UCP028774"/>
    <property type="match status" value="1"/>
</dbReference>
<dbReference type="SUPFAM" id="SSF53335">
    <property type="entry name" value="S-adenosyl-L-methionine-dependent methyltransferases"/>
    <property type="match status" value="1"/>
</dbReference>
<comment type="function">
    <text evidence="1">Catalyzes the 2'-O-methylation at nucleotide C2498 in 23S rRNA.</text>
</comment>
<comment type="catalytic activity">
    <reaction evidence="1">
        <text>cytidine(2498) in 23S rRNA + S-adenosyl-L-methionine = 2'-O-methylcytidine(2498) in 23S rRNA + S-adenosyl-L-homocysteine + H(+)</text>
        <dbReference type="Rhea" id="RHEA:42788"/>
        <dbReference type="Rhea" id="RHEA-COMP:10244"/>
        <dbReference type="Rhea" id="RHEA-COMP:10245"/>
        <dbReference type="ChEBI" id="CHEBI:15378"/>
        <dbReference type="ChEBI" id="CHEBI:57856"/>
        <dbReference type="ChEBI" id="CHEBI:59789"/>
        <dbReference type="ChEBI" id="CHEBI:74495"/>
        <dbReference type="ChEBI" id="CHEBI:82748"/>
        <dbReference type="EC" id="2.1.1.186"/>
    </reaction>
</comment>
<comment type="subunit">
    <text evidence="1">Monomer.</text>
</comment>
<comment type="subcellular location">
    <subcellularLocation>
        <location evidence="1">Cytoplasm</location>
    </subcellularLocation>
</comment>
<comment type="similarity">
    <text evidence="1">Belongs to the class I-like SAM-binding methyltransferase superfamily. RNA methyltransferase RlmE family. RlmM subfamily.</text>
</comment>
<gene>
    <name evidence="1" type="primary">rlmM</name>
    <name type="ordered locus">xcc-b100_3537</name>
</gene>
<sequence length="347" mass="38912">MSGLLCYCRQGFEPELAAELSARAAFVGIAGYARTQRNDGYVLFVCDEAAQLAARLQWRELIFARQKLVVLAELKGLDPKDRITPILAALDGQPRFGDLWVEHPDSDAGKPLAGLARSFGNALRPALRKAGLLTDKPQARLPRLHICFLDGDHALLAVADSSDSAPWPLGIPRLKLLPEAPSRSALKLDEALLTLLTPEEREQLVKPGMRAADLGAAPGGWTWVLTRQHVHVTSVDNGPLREHVLATGLVEHLRADGFHWKPAQPLDWMVCDMVEQPRRVAERMATWVREGWCRHTIFNLKLPMKKRWDETRLCLDLFEQQAEKSLTVRAKQLYHDREEITVLAMRG</sequence>
<proteinExistence type="inferred from homology"/>